<name>YQGF_STRPM</name>
<evidence type="ECO:0000255" key="1">
    <source>
        <dbReference type="HAMAP-Rule" id="MF_00651"/>
    </source>
</evidence>
<comment type="function">
    <text evidence="1">Could be a nuclease involved in processing of the 5'-end of pre-16S rRNA.</text>
</comment>
<comment type="subcellular location">
    <subcellularLocation>
        <location evidence="1">Cytoplasm</location>
    </subcellularLocation>
</comment>
<comment type="similarity">
    <text evidence="1">Belongs to the YqgF nuclease family.</text>
</comment>
<feature type="chain" id="PRO_0000257603" description="Putative pre-16S rRNA nuclease">
    <location>
        <begin position="1"/>
        <end position="139"/>
    </location>
</feature>
<keyword id="KW-0963">Cytoplasm</keyword>
<keyword id="KW-0378">Hydrolase</keyword>
<keyword id="KW-0540">Nuclease</keyword>
<keyword id="KW-0690">Ribosome biogenesis</keyword>
<reference key="1">
    <citation type="journal article" date="2005" name="J. Infect. Dis.">
        <title>Genome sequence of a serotype M28 strain of group A Streptococcus: potential new insights into puerperal sepsis and bacterial disease specificity.</title>
        <authorList>
            <person name="Green N.M."/>
            <person name="Zhang S."/>
            <person name="Porcella S.F."/>
            <person name="Nagiec M.J."/>
            <person name="Barbian K.D."/>
            <person name="Beres S.B."/>
            <person name="Lefebvre R.B."/>
            <person name="Musser J.M."/>
        </authorList>
    </citation>
    <scope>NUCLEOTIDE SEQUENCE [LARGE SCALE GENOMIC DNA]</scope>
    <source>
        <strain>MGAS6180</strain>
    </source>
</reference>
<proteinExistence type="inferred from homology"/>
<dbReference type="EC" id="3.1.-.-" evidence="1"/>
<dbReference type="EMBL" id="CP000056">
    <property type="protein sequence ID" value="AAX72890.1"/>
    <property type="molecule type" value="Genomic_DNA"/>
</dbReference>
<dbReference type="SMR" id="Q48QX0"/>
<dbReference type="KEGG" id="spb:M28_Spy1780"/>
<dbReference type="HOGENOM" id="CLU_098240_2_0_9"/>
<dbReference type="GO" id="GO:0005829">
    <property type="term" value="C:cytosol"/>
    <property type="evidence" value="ECO:0007669"/>
    <property type="project" value="TreeGrafter"/>
</dbReference>
<dbReference type="GO" id="GO:0004518">
    <property type="term" value="F:nuclease activity"/>
    <property type="evidence" value="ECO:0007669"/>
    <property type="project" value="UniProtKB-KW"/>
</dbReference>
<dbReference type="GO" id="GO:0000967">
    <property type="term" value="P:rRNA 5'-end processing"/>
    <property type="evidence" value="ECO:0007669"/>
    <property type="project" value="UniProtKB-UniRule"/>
</dbReference>
<dbReference type="CDD" id="cd16964">
    <property type="entry name" value="YqgF"/>
    <property type="match status" value="1"/>
</dbReference>
<dbReference type="FunFam" id="3.30.420.140:FF:000003">
    <property type="entry name" value="Putative pre-16S rRNA nuclease"/>
    <property type="match status" value="1"/>
</dbReference>
<dbReference type="Gene3D" id="3.30.420.140">
    <property type="entry name" value="YqgF/RNase H-like domain"/>
    <property type="match status" value="1"/>
</dbReference>
<dbReference type="HAMAP" id="MF_00651">
    <property type="entry name" value="Nuclease_YqgF"/>
    <property type="match status" value="1"/>
</dbReference>
<dbReference type="InterPro" id="IPR012337">
    <property type="entry name" value="RNaseH-like_sf"/>
</dbReference>
<dbReference type="InterPro" id="IPR005227">
    <property type="entry name" value="YqgF"/>
</dbReference>
<dbReference type="InterPro" id="IPR006641">
    <property type="entry name" value="YqgF/RNaseH-like_dom"/>
</dbReference>
<dbReference type="InterPro" id="IPR037027">
    <property type="entry name" value="YqgF/RNaseH-like_dom_sf"/>
</dbReference>
<dbReference type="NCBIfam" id="TIGR00250">
    <property type="entry name" value="RNAse_H_YqgF"/>
    <property type="match status" value="1"/>
</dbReference>
<dbReference type="PANTHER" id="PTHR33317">
    <property type="entry name" value="POLYNUCLEOTIDYL TRANSFERASE, RIBONUCLEASE H-LIKE SUPERFAMILY PROTEIN"/>
    <property type="match status" value="1"/>
</dbReference>
<dbReference type="PANTHER" id="PTHR33317:SF4">
    <property type="entry name" value="POLYNUCLEOTIDYL TRANSFERASE, RIBONUCLEASE H-LIKE SUPERFAMILY PROTEIN"/>
    <property type="match status" value="1"/>
</dbReference>
<dbReference type="Pfam" id="PF03652">
    <property type="entry name" value="RuvX"/>
    <property type="match status" value="1"/>
</dbReference>
<dbReference type="SMART" id="SM00732">
    <property type="entry name" value="YqgFc"/>
    <property type="match status" value="1"/>
</dbReference>
<dbReference type="SUPFAM" id="SSF53098">
    <property type="entry name" value="Ribonuclease H-like"/>
    <property type="match status" value="1"/>
</dbReference>
<sequence>MRIMGLDVGSKTVGVAISDPLGFTAQGLEIIKIDEEKAEFGFTRLEELVKQYQVEQFVIGLPKNMNNTNGPRVDASITYGNHIEHLFGLPVHYQDERLTTVEAERMLIEQADISRGKRKKVIDKLAAQLILQNYLNRNF</sequence>
<accession>Q48QX0</accession>
<gene>
    <name type="ordered locus">M28_Spy1780</name>
</gene>
<protein>
    <recommendedName>
        <fullName evidence="1">Putative pre-16S rRNA nuclease</fullName>
        <ecNumber evidence="1">3.1.-.-</ecNumber>
    </recommendedName>
</protein>
<organism>
    <name type="scientific">Streptococcus pyogenes serotype M28 (strain MGAS6180)</name>
    <dbReference type="NCBI Taxonomy" id="319701"/>
    <lineage>
        <taxon>Bacteria</taxon>
        <taxon>Bacillati</taxon>
        <taxon>Bacillota</taxon>
        <taxon>Bacilli</taxon>
        <taxon>Lactobacillales</taxon>
        <taxon>Streptococcaceae</taxon>
        <taxon>Streptococcus</taxon>
    </lineage>
</organism>